<comment type="function">
    <text evidence="1">Catalyzes the reversible transfer of the terminal phosphate group between ATP and AMP. Plays an important role in cellular energy homeostasis and in adenine nucleotide metabolism.</text>
</comment>
<comment type="catalytic activity">
    <reaction evidence="1">
        <text>AMP + ATP = 2 ADP</text>
        <dbReference type="Rhea" id="RHEA:12973"/>
        <dbReference type="ChEBI" id="CHEBI:30616"/>
        <dbReference type="ChEBI" id="CHEBI:456215"/>
        <dbReference type="ChEBI" id="CHEBI:456216"/>
        <dbReference type="EC" id="2.7.4.3"/>
    </reaction>
</comment>
<comment type="pathway">
    <text evidence="1">Purine metabolism; AMP biosynthesis via salvage pathway; AMP from ADP: step 1/1.</text>
</comment>
<comment type="subunit">
    <text evidence="1">Monomer.</text>
</comment>
<comment type="subcellular location">
    <subcellularLocation>
        <location evidence="1">Cytoplasm</location>
    </subcellularLocation>
</comment>
<comment type="domain">
    <text evidence="1">Consists of three domains, a large central CORE domain and two small peripheral domains, NMPbind and LID, which undergo movements during catalysis. The LID domain closes over the site of phosphoryl transfer upon ATP binding. Assembling and dissambling the active center during each catalytic cycle provides an effective means to prevent ATP hydrolysis.</text>
</comment>
<comment type="similarity">
    <text evidence="1">Belongs to the adenylate kinase family.</text>
</comment>
<name>KAD2_NOSS1</name>
<organism>
    <name type="scientific">Nostoc sp. (strain PCC 7120 / SAG 25.82 / UTEX 2576)</name>
    <dbReference type="NCBI Taxonomy" id="103690"/>
    <lineage>
        <taxon>Bacteria</taxon>
        <taxon>Bacillati</taxon>
        <taxon>Cyanobacteriota</taxon>
        <taxon>Cyanophyceae</taxon>
        <taxon>Nostocales</taxon>
        <taxon>Nostocaceae</taxon>
        <taxon>Nostoc</taxon>
    </lineage>
</organism>
<accession>Q8Z0M3</accession>
<evidence type="ECO:0000255" key="1">
    <source>
        <dbReference type="HAMAP-Rule" id="MF_00235"/>
    </source>
</evidence>
<dbReference type="EC" id="2.7.4.3" evidence="1"/>
<dbReference type="EMBL" id="BA000019">
    <property type="protein sequence ID" value="BAB77592.1"/>
    <property type="molecule type" value="Genomic_DNA"/>
</dbReference>
<dbReference type="PIR" id="AD1815">
    <property type="entry name" value="AD1815"/>
</dbReference>
<dbReference type="RefSeq" id="WP_010994245.1">
    <property type="nucleotide sequence ID" value="NZ_RSCN01000016.1"/>
</dbReference>
<dbReference type="SMR" id="Q8Z0M3"/>
<dbReference type="STRING" id="103690.gene:10492072"/>
<dbReference type="KEGG" id="ana:alr0068"/>
<dbReference type="eggNOG" id="COG0563">
    <property type="taxonomic scope" value="Bacteria"/>
</dbReference>
<dbReference type="OrthoDB" id="9805030at2"/>
<dbReference type="UniPathway" id="UPA00588">
    <property type="reaction ID" value="UER00649"/>
</dbReference>
<dbReference type="Proteomes" id="UP000002483">
    <property type="component" value="Chromosome"/>
</dbReference>
<dbReference type="GO" id="GO:0005737">
    <property type="term" value="C:cytoplasm"/>
    <property type="evidence" value="ECO:0007669"/>
    <property type="project" value="UniProtKB-SubCell"/>
</dbReference>
<dbReference type="GO" id="GO:0004017">
    <property type="term" value="F:adenylate kinase activity"/>
    <property type="evidence" value="ECO:0007669"/>
    <property type="project" value="UniProtKB-UniRule"/>
</dbReference>
<dbReference type="GO" id="GO:0005524">
    <property type="term" value="F:ATP binding"/>
    <property type="evidence" value="ECO:0007669"/>
    <property type="project" value="UniProtKB-UniRule"/>
</dbReference>
<dbReference type="GO" id="GO:0044209">
    <property type="term" value="P:AMP salvage"/>
    <property type="evidence" value="ECO:0007669"/>
    <property type="project" value="UniProtKB-UniRule"/>
</dbReference>
<dbReference type="CDD" id="cd01428">
    <property type="entry name" value="ADK"/>
    <property type="match status" value="1"/>
</dbReference>
<dbReference type="Gene3D" id="3.40.50.300">
    <property type="entry name" value="P-loop containing nucleotide triphosphate hydrolases"/>
    <property type="match status" value="1"/>
</dbReference>
<dbReference type="HAMAP" id="MF_00235">
    <property type="entry name" value="Adenylate_kinase_Adk"/>
    <property type="match status" value="1"/>
</dbReference>
<dbReference type="InterPro" id="IPR000850">
    <property type="entry name" value="Adenylat/UMP-CMP_kin"/>
</dbReference>
<dbReference type="InterPro" id="IPR027417">
    <property type="entry name" value="P-loop_NTPase"/>
</dbReference>
<dbReference type="PANTHER" id="PTHR23359">
    <property type="entry name" value="NUCLEOTIDE KINASE"/>
    <property type="match status" value="1"/>
</dbReference>
<dbReference type="Pfam" id="PF00406">
    <property type="entry name" value="ADK"/>
    <property type="match status" value="1"/>
</dbReference>
<dbReference type="PRINTS" id="PR00094">
    <property type="entry name" value="ADENYLTKNASE"/>
</dbReference>
<dbReference type="SUPFAM" id="SSF52540">
    <property type="entry name" value="P-loop containing nucleoside triphosphate hydrolases"/>
    <property type="match status" value="1"/>
</dbReference>
<protein>
    <recommendedName>
        <fullName evidence="1">Adenylate kinase 2</fullName>
        <shortName evidence="1">AK 2</shortName>
        <ecNumber evidence="1">2.7.4.3</ecNumber>
    </recommendedName>
    <alternativeName>
        <fullName evidence="1">ATP-AMP transphosphorylase 2</fullName>
    </alternativeName>
    <alternativeName>
        <fullName evidence="1">ATP:AMP phosphotransferase 2</fullName>
    </alternativeName>
    <alternativeName>
        <fullName evidence="1">Adenylate monophosphate kinase 2</fullName>
    </alternativeName>
</protein>
<feature type="chain" id="PRO_0000158717" description="Adenylate kinase 2">
    <location>
        <begin position="1"/>
        <end position="184"/>
    </location>
</feature>
<feature type="region of interest" description="NMP" evidence="1">
    <location>
        <begin position="30"/>
        <end position="59"/>
    </location>
</feature>
<feature type="region of interest" description="LID" evidence="1">
    <location>
        <begin position="126"/>
        <end position="132"/>
    </location>
</feature>
<feature type="binding site" evidence="1">
    <location>
        <begin position="10"/>
        <end position="15"/>
    </location>
    <ligand>
        <name>ATP</name>
        <dbReference type="ChEBI" id="CHEBI:30616"/>
    </ligand>
</feature>
<feature type="binding site" evidence="1">
    <location>
        <position position="31"/>
    </location>
    <ligand>
        <name>AMP</name>
        <dbReference type="ChEBI" id="CHEBI:456215"/>
    </ligand>
</feature>
<feature type="binding site" evidence="1">
    <location>
        <position position="36"/>
    </location>
    <ligand>
        <name>AMP</name>
        <dbReference type="ChEBI" id="CHEBI:456215"/>
    </ligand>
</feature>
<feature type="binding site" evidence="1">
    <location>
        <begin position="57"/>
        <end position="59"/>
    </location>
    <ligand>
        <name>AMP</name>
        <dbReference type="ChEBI" id="CHEBI:456215"/>
    </ligand>
</feature>
<feature type="binding site" evidence="1">
    <location>
        <begin position="85"/>
        <end position="88"/>
    </location>
    <ligand>
        <name>AMP</name>
        <dbReference type="ChEBI" id="CHEBI:456215"/>
    </ligand>
</feature>
<feature type="binding site" evidence="1">
    <location>
        <position position="92"/>
    </location>
    <ligand>
        <name>AMP</name>
        <dbReference type="ChEBI" id="CHEBI:456215"/>
    </ligand>
</feature>
<feature type="binding site" evidence="1">
    <location>
        <position position="127"/>
    </location>
    <ligand>
        <name>ATP</name>
        <dbReference type="ChEBI" id="CHEBI:30616"/>
    </ligand>
</feature>
<feature type="binding site" evidence="1">
    <location>
        <position position="140"/>
    </location>
    <ligand>
        <name>AMP</name>
        <dbReference type="ChEBI" id="CHEBI:456215"/>
    </ligand>
</feature>
<feature type="binding site" evidence="1">
    <location>
        <position position="168"/>
    </location>
    <ligand>
        <name>ATP</name>
        <dbReference type="ChEBI" id="CHEBI:30616"/>
    </ligand>
</feature>
<reference key="1">
    <citation type="journal article" date="2001" name="DNA Res.">
        <title>Complete genomic sequence of the filamentous nitrogen-fixing cyanobacterium Anabaena sp. strain PCC 7120.</title>
        <authorList>
            <person name="Kaneko T."/>
            <person name="Nakamura Y."/>
            <person name="Wolk C.P."/>
            <person name="Kuritz T."/>
            <person name="Sasamoto S."/>
            <person name="Watanabe A."/>
            <person name="Iriguchi M."/>
            <person name="Ishikawa A."/>
            <person name="Kawashima K."/>
            <person name="Kimura T."/>
            <person name="Kishida Y."/>
            <person name="Kohara M."/>
            <person name="Matsumoto M."/>
            <person name="Matsuno A."/>
            <person name="Muraki A."/>
            <person name="Nakazaki N."/>
            <person name="Shimpo S."/>
            <person name="Sugimoto M."/>
            <person name="Takazawa M."/>
            <person name="Yamada M."/>
            <person name="Yasuda M."/>
            <person name="Tabata S."/>
        </authorList>
    </citation>
    <scope>NUCLEOTIDE SEQUENCE [LARGE SCALE GENOMIC DNA]</scope>
    <source>
        <strain>PCC 7120 / SAG 25.82 / UTEX 2576</strain>
    </source>
</reference>
<gene>
    <name evidence="1" type="primary">adk2</name>
    <name type="ordered locus">alr0068</name>
</gene>
<proteinExistence type="inferred from homology"/>
<keyword id="KW-0067">ATP-binding</keyword>
<keyword id="KW-0963">Cytoplasm</keyword>
<keyword id="KW-0418">Kinase</keyword>
<keyword id="KW-0545">Nucleotide biosynthesis</keyword>
<keyword id="KW-0547">Nucleotide-binding</keyword>
<keyword id="KW-1185">Reference proteome</keyword>
<keyword id="KW-0808">Transferase</keyword>
<sequence>MRLVILGGSGSGKSTQAQRLCSHLEITQISTGEILREAISHLSELGRHAQPYMIKGELVPDEMIIELIRLRLKKSDVIDGWVLEGYPRTAFQAEELDFLLDELGQKLDWAIYLQVPEAVMVSRSLGRSLPDDQPEIVQRRVEIFYDRTVPILEYYDRRRRLLTINGDQSPELVLQSILKLLLVT</sequence>